<reference key="1">
    <citation type="journal article" date="2007" name="J. Bacteriol.">
        <title>Complete genome sequence of Haemophilus somnus (Histophilus somni) strain 129Pt and comparison to Haemophilus ducreyi 35000HP and Haemophilus influenzae Rd.</title>
        <authorList>
            <person name="Challacombe J.F."/>
            <person name="Duncan A.J."/>
            <person name="Brettin T.S."/>
            <person name="Bruce D."/>
            <person name="Chertkov O."/>
            <person name="Detter J.C."/>
            <person name="Han C.S."/>
            <person name="Misra M."/>
            <person name="Richardson P."/>
            <person name="Tapia R."/>
            <person name="Thayer N."/>
            <person name="Xie G."/>
            <person name="Inzana T.J."/>
        </authorList>
    </citation>
    <scope>NUCLEOTIDE SEQUENCE [LARGE SCALE GENOMIC DNA]</scope>
    <source>
        <strain>129Pt</strain>
    </source>
</reference>
<accession>Q0I0X8</accession>
<organism>
    <name type="scientific">Histophilus somni (strain 129Pt)</name>
    <name type="common">Haemophilus somnus</name>
    <dbReference type="NCBI Taxonomy" id="205914"/>
    <lineage>
        <taxon>Bacteria</taxon>
        <taxon>Pseudomonadati</taxon>
        <taxon>Pseudomonadota</taxon>
        <taxon>Gammaproteobacteria</taxon>
        <taxon>Pasteurellales</taxon>
        <taxon>Pasteurellaceae</taxon>
        <taxon>Histophilus</taxon>
    </lineage>
</organism>
<gene>
    <name evidence="1" type="primary">rpmB</name>
    <name type="ordered locus">HS_0145</name>
</gene>
<dbReference type="EMBL" id="CP000436">
    <property type="protein sequence ID" value="ABI24423.1"/>
    <property type="molecule type" value="Genomic_DNA"/>
</dbReference>
<dbReference type="SMR" id="Q0I0X8"/>
<dbReference type="KEGG" id="hso:HS_0145"/>
<dbReference type="eggNOG" id="COG0227">
    <property type="taxonomic scope" value="Bacteria"/>
</dbReference>
<dbReference type="HOGENOM" id="CLU_064548_3_1_6"/>
<dbReference type="GO" id="GO:0022625">
    <property type="term" value="C:cytosolic large ribosomal subunit"/>
    <property type="evidence" value="ECO:0007669"/>
    <property type="project" value="TreeGrafter"/>
</dbReference>
<dbReference type="GO" id="GO:0003735">
    <property type="term" value="F:structural constituent of ribosome"/>
    <property type="evidence" value="ECO:0007669"/>
    <property type="project" value="InterPro"/>
</dbReference>
<dbReference type="GO" id="GO:0006412">
    <property type="term" value="P:translation"/>
    <property type="evidence" value="ECO:0007669"/>
    <property type="project" value="UniProtKB-UniRule"/>
</dbReference>
<dbReference type="FunFam" id="2.30.170.40:FF:000001">
    <property type="entry name" value="50S ribosomal protein L28"/>
    <property type="match status" value="1"/>
</dbReference>
<dbReference type="Gene3D" id="2.30.170.40">
    <property type="entry name" value="Ribosomal protein L28/L24"/>
    <property type="match status" value="1"/>
</dbReference>
<dbReference type="HAMAP" id="MF_00373">
    <property type="entry name" value="Ribosomal_bL28"/>
    <property type="match status" value="1"/>
</dbReference>
<dbReference type="InterPro" id="IPR026569">
    <property type="entry name" value="Ribosomal_bL28"/>
</dbReference>
<dbReference type="InterPro" id="IPR034704">
    <property type="entry name" value="Ribosomal_bL28/bL31-like_sf"/>
</dbReference>
<dbReference type="InterPro" id="IPR001383">
    <property type="entry name" value="Ribosomal_bL28_bact-type"/>
</dbReference>
<dbReference type="InterPro" id="IPR037147">
    <property type="entry name" value="Ribosomal_bL28_sf"/>
</dbReference>
<dbReference type="NCBIfam" id="TIGR00009">
    <property type="entry name" value="L28"/>
    <property type="match status" value="1"/>
</dbReference>
<dbReference type="PANTHER" id="PTHR13528">
    <property type="entry name" value="39S RIBOSOMAL PROTEIN L28, MITOCHONDRIAL"/>
    <property type="match status" value="1"/>
</dbReference>
<dbReference type="PANTHER" id="PTHR13528:SF2">
    <property type="entry name" value="LARGE RIBOSOMAL SUBUNIT PROTEIN BL28M"/>
    <property type="match status" value="1"/>
</dbReference>
<dbReference type="Pfam" id="PF00830">
    <property type="entry name" value="Ribosomal_L28"/>
    <property type="match status" value="1"/>
</dbReference>
<dbReference type="SUPFAM" id="SSF143800">
    <property type="entry name" value="L28p-like"/>
    <property type="match status" value="1"/>
</dbReference>
<comment type="similarity">
    <text evidence="1">Belongs to the bacterial ribosomal protein bL28 family.</text>
</comment>
<feature type="chain" id="PRO_1000007249" description="Large ribosomal subunit protein bL28">
    <location>
        <begin position="1"/>
        <end position="78"/>
    </location>
</feature>
<name>RL28_HISS1</name>
<sequence length="78" mass="8999">MSRVCQVTGKRPAVGNNRSHAMNATRRRFLPNLHTHRFWVESEKRFVTLRLTAKGMRIIDKKGIDAVLAEIRARGEKI</sequence>
<evidence type="ECO:0000255" key="1">
    <source>
        <dbReference type="HAMAP-Rule" id="MF_00373"/>
    </source>
</evidence>
<evidence type="ECO:0000305" key="2"/>
<keyword id="KW-0687">Ribonucleoprotein</keyword>
<keyword id="KW-0689">Ribosomal protein</keyword>
<protein>
    <recommendedName>
        <fullName evidence="1">Large ribosomal subunit protein bL28</fullName>
    </recommendedName>
    <alternativeName>
        <fullName evidence="2">50S ribosomal protein L28</fullName>
    </alternativeName>
</protein>
<proteinExistence type="inferred from homology"/>